<evidence type="ECO:0000255" key="1">
    <source>
        <dbReference type="HAMAP-Rule" id="MF_00435"/>
    </source>
</evidence>
<evidence type="ECO:0000255" key="2">
    <source>
        <dbReference type="PROSITE-ProRule" id="PRU01197"/>
    </source>
</evidence>
<evidence type="ECO:0000255" key="3">
    <source>
        <dbReference type="PROSITE-ProRule" id="PRU01198"/>
    </source>
</evidence>
<proteinExistence type="inferred from homology"/>
<comment type="function">
    <text evidence="1">Involved in the biosynthesis of branched-chain amino acids (BCAA). Catalyzes an alkyl-migration followed by a ketol-acid reduction of (S)-2-acetolactate (S2AL) to yield (R)-2,3-dihydroxy-isovalerate. In the isomerase reaction, S2AL is rearranged via a Mg-dependent methyl migration to produce 3-hydroxy-3-methyl-2-ketobutyrate (HMKB). In the reductase reaction, this 2-ketoacid undergoes a metal-dependent reduction by NADPH to yield (R)-2,3-dihydroxy-isovalerate.</text>
</comment>
<comment type="catalytic activity">
    <reaction evidence="1">
        <text>(2R)-2,3-dihydroxy-3-methylbutanoate + NADP(+) = (2S)-2-acetolactate + NADPH + H(+)</text>
        <dbReference type="Rhea" id="RHEA:22068"/>
        <dbReference type="ChEBI" id="CHEBI:15378"/>
        <dbReference type="ChEBI" id="CHEBI:49072"/>
        <dbReference type="ChEBI" id="CHEBI:57783"/>
        <dbReference type="ChEBI" id="CHEBI:58349"/>
        <dbReference type="ChEBI" id="CHEBI:58476"/>
        <dbReference type="EC" id="1.1.1.86"/>
    </reaction>
</comment>
<comment type="catalytic activity">
    <reaction evidence="1">
        <text>(2R,3R)-2,3-dihydroxy-3-methylpentanoate + NADP(+) = (S)-2-ethyl-2-hydroxy-3-oxobutanoate + NADPH + H(+)</text>
        <dbReference type="Rhea" id="RHEA:13493"/>
        <dbReference type="ChEBI" id="CHEBI:15378"/>
        <dbReference type="ChEBI" id="CHEBI:49256"/>
        <dbReference type="ChEBI" id="CHEBI:49258"/>
        <dbReference type="ChEBI" id="CHEBI:57783"/>
        <dbReference type="ChEBI" id="CHEBI:58349"/>
        <dbReference type="EC" id="1.1.1.86"/>
    </reaction>
</comment>
<comment type="cofactor">
    <cofactor evidence="1">
        <name>Mg(2+)</name>
        <dbReference type="ChEBI" id="CHEBI:18420"/>
    </cofactor>
    <text evidence="1">Binds 2 magnesium ions per subunit.</text>
</comment>
<comment type="pathway">
    <text evidence="1">Amino-acid biosynthesis; L-isoleucine biosynthesis; L-isoleucine from 2-oxobutanoate: step 2/4.</text>
</comment>
<comment type="pathway">
    <text evidence="1">Amino-acid biosynthesis; L-valine biosynthesis; L-valine from pyruvate: step 2/4.</text>
</comment>
<comment type="similarity">
    <text evidence="1">Belongs to the ketol-acid reductoisomerase family.</text>
</comment>
<dbReference type="EC" id="1.1.1.86" evidence="1"/>
<dbReference type="EMBL" id="AP009324">
    <property type="protein sequence ID" value="BAF78924.1"/>
    <property type="molecule type" value="Genomic_DNA"/>
</dbReference>
<dbReference type="RefSeq" id="WP_000214552.1">
    <property type="nucleotide sequence ID" value="NC_009782.1"/>
</dbReference>
<dbReference type="SMR" id="A7X4M9"/>
<dbReference type="KEGG" id="saw:SAHV_2041"/>
<dbReference type="HOGENOM" id="CLU_033821_0_1_9"/>
<dbReference type="UniPathway" id="UPA00047">
    <property type="reaction ID" value="UER00056"/>
</dbReference>
<dbReference type="UniPathway" id="UPA00049">
    <property type="reaction ID" value="UER00060"/>
</dbReference>
<dbReference type="GO" id="GO:0005829">
    <property type="term" value="C:cytosol"/>
    <property type="evidence" value="ECO:0007669"/>
    <property type="project" value="TreeGrafter"/>
</dbReference>
<dbReference type="GO" id="GO:0004455">
    <property type="term" value="F:ketol-acid reductoisomerase activity"/>
    <property type="evidence" value="ECO:0007669"/>
    <property type="project" value="UniProtKB-UniRule"/>
</dbReference>
<dbReference type="GO" id="GO:0000287">
    <property type="term" value="F:magnesium ion binding"/>
    <property type="evidence" value="ECO:0007669"/>
    <property type="project" value="UniProtKB-UniRule"/>
</dbReference>
<dbReference type="GO" id="GO:0050661">
    <property type="term" value="F:NADP binding"/>
    <property type="evidence" value="ECO:0007669"/>
    <property type="project" value="InterPro"/>
</dbReference>
<dbReference type="GO" id="GO:0009097">
    <property type="term" value="P:isoleucine biosynthetic process"/>
    <property type="evidence" value="ECO:0007669"/>
    <property type="project" value="UniProtKB-UniRule"/>
</dbReference>
<dbReference type="GO" id="GO:0009099">
    <property type="term" value="P:L-valine biosynthetic process"/>
    <property type="evidence" value="ECO:0007669"/>
    <property type="project" value="UniProtKB-UniRule"/>
</dbReference>
<dbReference type="FunFam" id="3.40.50.720:FF:000023">
    <property type="entry name" value="Ketol-acid reductoisomerase (NADP(+))"/>
    <property type="match status" value="1"/>
</dbReference>
<dbReference type="Gene3D" id="6.10.240.10">
    <property type="match status" value="1"/>
</dbReference>
<dbReference type="Gene3D" id="3.40.50.720">
    <property type="entry name" value="NAD(P)-binding Rossmann-like Domain"/>
    <property type="match status" value="1"/>
</dbReference>
<dbReference type="HAMAP" id="MF_00435">
    <property type="entry name" value="IlvC"/>
    <property type="match status" value="1"/>
</dbReference>
<dbReference type="InterPro" id="IPR008927">
    <property type="entry name" value="6-PGluconate_DH-like_C_sf"/>
</dbReference>
<dbReference type="InterPro" id="IPR013023">
    <property type="entry name" value="KARI"/>
</dbReference>
<dbReference type="InterPro" id="IPR000506">
    <property type="entry name" value="KARI_C"/>
</dbReference>
<dbReference type="InterPro" id="IPR013116">
    <property type="entry name" value="KARI_N"/>
</dbReference>
<dbReference type="InterPro" id="IPR014359">
    <property type="entry name" value="KARI_prok"/>
</dbReference>
<dbReference type="InterPro" id="IPR036291">
    <property type="entry name" value="NAD(P)-bd_dom_sf"/>
</dbReference>
<dbReference type="NCBIfam" id="TIGR00465">
    <property type="entry name" value="ilvC"/>
    <property type="match status" value="1"/>
</dbReference>
<dbReference type="NCBIfam" id="NF004017">
    <property type="entry name" value="PRK05479.1"/>
    <property type="match status" value="1"/>
</dbReference>
<dbReference type="NCBIfam" id="NF009940">
    <property type="entry name" value="PRK13403.1"/>
    <property type="match status" value="1"/>
</dbReference>
<dbReference type="PANTHER" id="PTHR21371">
    <property type="entry name" value="KETOL-ACID REDUCTOISOMERASE, MITOCHONDRIAL"/>
    <property type="match status" value="1"/>
</dbReference>
<dbReference type="PANTHER" id="PTHR21371:SF1">
    <property type="entry name" value="KETOL-ACID REDUCTOISOMERASE, MITOCHONDRIAL"/>
    <property type="match status" value="1"/>
</dbReference>
<dbReference type="Pfam" id="PF01450">
    <property type="entry name" value="KARI_C"/>
    <property type="match status" value="1"/>
</dbReference>
<dbReference type="Pfam" id="PF07991">
    <property type="entry name" value="KARI_N"/>
    <property type="match status" value="1"/>
</dbReference>
<dbReference type="PIRSF" id="PIRSF000116">
    <property type="entry name" value="IlvC_gammaproteo"/>
    <property type="match status" value="1"/>
</dbReference>
<dbReference type="SUPFAM" id="SSF48179">
    <property type="entry name" value="6-phosphogluconate dehydrogenase C-terminal domain-like"/>
    <property type="match status" value="1"/>
</dbReference>
<dbReference type="SUPFAM" id="SSF51735">
    <property type="entry name" value="NAD(P)-binding Rossmann-fold domains"/>
    <property type="match status" value="1"/>
</dbReference>
<dbReference type="PROSITE" id="PS51851">
    <property type="entry name" value="KARI_C"/>
    <property type="match status" value="1"/>
</dbReference>
<dbReference type="PROSITE" id="PS51850">
    <property type="entry name" value="KARI_N"/>
    <property type="match status" value="1"/>
</dbReference>
<gene>
    <name evidence="1" type="primary">ilvC</name>
    <name type="ordered locus">SAHV_2041</name>
</gene>
<organism>
    <name type="scientific">Staphylococcus aureus (strain Mu3 / ATCC 700698)</name>
    <dbReference type="NCBI Taxonomy" id="418127"/>
    <lineage>
        <taxon>Bacteria</taxon>
        <taxon>Bacillati</taxon>
        <taxon>Bacillota</taxon>
        <taxon>Bacilli</taxon>
        <taxon>Bacillales</taxon>
        <taxon>Staphylococcaceae</taxon>
        <taxon>Staphylococcus</taxon>
    </lineage>
</organism>
<sequence>MTTVYYDQDVKTDALQGKKIAVVGYGSQGHAHAQNLKDNGYDVVIGIRPGRSFDKAKEDGFDVFPVAEAVKQADVIMVLLPDEIQGDVYKNEIEPNLEKHNALAFAHGFNIHFGVIQPPADVDVFLVAPKGPGHLVRRTFVEGSAVPSLFGIQQDASGQARNIALSYAKGIGATRAGVIETTFKEETETDLFGEQAVLCGGVSKLIQSGFETLVEAGYQPELAYFEVLHEMKLIVDLMYEGGMENVRYSISNTAEFGDYVSGPRVITPDVKENMKAVLTDIQNGNFSNRFIEDNKNGFKEFYKLREEQHGHQIEKVGRELREMMPFIKSKSIEK</sequence>
<protein>
    <recommendedName>
        <fullName evidence="1">Ketol-acid reductoisomerase (NADP(+))</fullName>
        <shortName evidence="1">KARI</shortName>
        <ecNumber evidence="1">1.1.1.86</ecNumber>
    </recommendedName>
    <alternativeName>
        <fullName evidence="1">Acetohydroxy-acid isomeroreductase</fullName>
        <shortName evidence="1">AHIR</shortName>
    </alternativeName>
    <alternativeName>
        <fullName evidence="1">Alpha-keto-beta-hydroxylacyl reductoisomerase</fullName>
    </alternativeName>
    <alternativeName>
        <fullName evidence="1">Ketol-acid reductoisomerase type 1</fullName>
    </alternativeName>
    <alternativeName>
        <fullName evidence="1">Ketol-acid reductoisomerase type I</fullName>
    </alternativeName>
</protein>
<feature type="chain" id="PRO_1000050577" description="Ketol-acid reductoisomerase (NADP(+))">
    <location>
        <begin position="1"/>
        <end position="334"/>
    </location>
</feature>
<feature type="domain" description="KARI N-terminal Rossmann" evidence="2">
    <location>
        <begin position="1"/>
        <end position="181"/>
    </location>
</feature>
<feature type="domain" description="KARI C-terminal knotted" evidence="3">
    <location>
        <begin position="182"/>
        <end position="327"/>
    </location>
</feature>
<feature type="active site" evidence="1">
    <location>
        <position position="107"/>
    </location>
</feature>
<feature type="binding site" evidence="1">
    <location>
        <begin position="25"/>
        <end position="28"/>
    </location>
    <ligand>
        <name>NADP(+)</name>
        <dbReference type="ChEBI" id="CHEBI:58349"/>
    </ligand>
</feature>
<feature type="binding site" evidence="1">
    <location>
        <position position="48"/>
    </location>
    <ligand>
        <name>NADP(+)</name>
        <dbReference type="ChEBI" id="CHEBI:58349"/>
    </ligand>
</feature>
<feature type="binding site" evidence="1">
    <location>
        <position position="52"/>
    </location>
    <ligand>
        <name>NADP(+)</name>
        <dbReference type="ChEBI" id="CHEBI:58349"/>
    </ligand>
</feature>
<feature type="binding site" evidence="1">
    <location>
        <begin position="82"/>
        <end position="85"/>
    </location>
    <ligand>
        <name>NADP(+)</name>
        <dbReference type="ChEBI" id="CHEBI:58349"/>
    </ligand>
</feature>
<feature type="binding site" evidence="1">
    <location>
        <position position="133"/>
    </location>
    <ligand>
        <name>NADP(+)</name>
        <dbReference type="ChEBI" id="CHEBI:58349"/>
    </ligand>
</feature>
<feature type="binding site" evidence="1">
    <location>
        <position position="190"/>
    </location>
    <ligand>
        <name>Mg(2+)</name>
        <dbReference type="ChEBI" id="CHEBI:18420"/>
        <label>1</label>
    </ligand>
</feature>
<feature type="binding site" evidence="1">
    <location>
        <position position="190"/>
    </location>
    <ligand>
        <name>Mg(2+)</name>
        <dbReference type="ChEBI" id="CHEBI:18420"/>
        <label>2</label>
    </ligand>
</feature>
<feature type="binding site" evidence="1">
    <location>
        <position position="194"/>
    </location>
    <ligand>
        <name>Mg(2+)</name>
        <dbReference type="ChEBI" id="CHEBI:18420"/>
        <label>1</label>
    </ligand>
</feature>
<feature type="binding site" evidence="1">
    <location>
        <position position="226"/>
    </location>
    <ligand>
        <name>Mg(2+)</name>
        <dbReference type="ChEBI" id="CHEBI:18420"/>
        <label>2</label>
    </ligand>
</feature>
<feature type="binding site" evidence="1">
    <location>
        <position position="230"/>
    </location>
    <ligand>
        <name>Mg(2+)</name>
        <dbReference type="ChEBI" id="CHEBI:18420"/>
        <label>2</label>
    </ligand>
</feature>
<feature type="binding site" evidence="1">
    <location>
        <position position="251"/>
    </location>
    <ligand>
        <name>substrate</name>
    </ligand>
</feature>
<reference key="1">
    <citation type="journal article" date="2008" name="Antimicrob. Agents Chemother.">
        <title>Mutated response regulator graR is responsible for phenotypic conversion of Staphylococcus aureus from heterogeneous vancomycin-intermediate resistance to vancomycin-intermediate resistance.</title>
        <authorList>
            <person name="Neoh H.-M."/>
            <person name="Cui L."/>
            <person name="Yuzawa H."/>
            <person name="Takeuchi F."/>
            <person name="Matsuo M."/>
            <person name="Hiramatsu K."/>
        </authorList>
    </citation>
    <scope>NUCLEOTIDE SEQUENCE [LARGE SCALE GENOMIC DNA]</scope>
    <source>
        <strain>Mu3 / ATCC 700698</strain>
    </source>
</reference>
<accession>A7X4M9</accession>
<keyword id="KW-0028">Amino-acid biosynthesis</keyword>
<keyword id="KW-0100">Branched-chain amino acid biosynthesis</keyword>
<keyword id="KW-0460">Magnesium</keyword>
<keyword id="KW-0479">Metal-binding</keyword>
<keyword id="KW-0521">NADP</keyword>
<keyword id="KW-0560">Oxidoreductase</keyword>
<name>ILVC_STAA1</name>